<proteinExistence type="evidence at transcript level"/>
<protein>
    <recommendedName>
        <fullName>Inhibitor of growth protein 3</fullName>
    </recommendedName>
</protein>
<accession>Q5RBA1</accession>
<organism>
    <name type="scientific">Pongo abelii</name>
    <name type="common">Sumatran orangutan</name>
    <name type="synonym">Pongo pygmaeus abelii</name>
    <dbReference type="NCBI Taxonomy" id="9601"/>
    <lineage>
        <taxon>Eukaryota</taxon>
        <taxon>Metazoa</taxon>
        <taxon>Chordata</taxon>
        <taxon>Craniata</taxon>
        <taxon>Vertebrata</taxon>
        <taxon>Euteleostomi</taxon>
        <taxon>Mammalia</taxon>
        <taxon>Eutheria</taxon>
        <taxon>Euarchontoglires</taxon>
        <taxon>Primates</taxon>
        <taxon>Haplorrhini</taxon>
        <taxon>Catarrhini</taxon>
        <taxon>Hominidae</taxon>
        <taxon>Pongo</taxon>
    </lineage>
</organism>
<reference key="1">
    <citation type="submission" date="2004-11" db="EMBL/GenBank/DDBJ databases">
        <authorList>
            <consortium name="The German cDNA consortium"/>
        </authorList>
    </citation>
    <scope>NUCLEOTIDE SEQUENCE [LARGE SCALE MRNA]</scope>
    <source>
        <tissue>Brain cortex</tissue>
    </source>
</reference>
<sequence length="403" mass="44860">MDLRDRFTEMREMDLQVQNAMDQLEQRASEFFMNAKKNKPEWREEQMASIKKDYYKALEDADEKVQLANQIYDLVDRHLRKLDQELAKFKMELEADNAGITEILERRSLELDTPSQPVNNHHAHSHTPVEKRKYNPTSHHTTTDHIPEKKFKSEALLSTLTSDASKENTLGCRNNNSTASSNNAYNVNSSQPLGSYNIGSLSSGTGAGAITMAAAQAVQATAQMREGRRTSSLKASYEAFKNNDFQLGKEFSMARETVGYSSSSALMTTLTQNASSSAADSRSGRKSKNNNKSSSQQSSSSSSSSSLSSCSSSSTVVQEISQQTTVVPESDSNSQVDWTYDPNEPRYCICNQVSYGEMVGCDNQDCPIEWFHYGCVGLTEAPKGKWYCPQCTAAMKRRGSRHK</sequence>
<name>ING3_PONAB</name>
<keyword id="KW-0007">Acetylation</keyword>
<keyword id="KW-0156">Chromatin regulator</keyword>
<keyword id="KW-0341">Growth regulation</keyword>
<keyword id="KW-1017">Isopeptide bond</keyword>
<keyword id="KW-0479">Metal-binding</keyword>
<keyword id="KW-0539">Nucleus</keyword>
<keyword id="KW-1185">Reference proteome</keyword>
<keyword id="KW-0804">Transcription</keyword>
<keyword id="KW-0805">Transcription regulation</keyword>
<keyword id="KW-0832">Ubl conjugation</keyword>
<keyword id="KW-0862">Zinc</keyword>
<keyword id="KW-0863">Zinc-finger</keyword>
<gene>
    <name type="primary">ING3</name>
</gene>
<evidence type="ECO:0000250" key="1"/>
<evidence type="ECO:0000250" key="2">
    <source>
        <dbReference type="UniProtKB" id="Q8VEK6"/>
    </source>
</evidence>
<evidence type="ECO:0000250" key="3">
    <source>
        <dbReference type="UniProtKB" id="Q9NXR8"/>
    </source>
</evidence>
<evidence type="ECO:0000250" key="4">
    <source>
        <dbReference type="UniProtKB" id="Q9UK53"/>
    </source>
</evidence>
<evidence type="ECO:0000255" key="5">
    <source>
        <dbReference type="PROSITE-ProRule" id="PRU00146"/>
    </source>
</evidence>
<evidence type="ECO:0000256" key="6">
    <source>
        <dbReference type="SAM" id="MobiDB-lite"/>
    </source>
</evidence>
<evidence type="ECO:0000305" key="7"/>
<dbReference type="EMBL" id="CR858750">
    <property type="protein sequence ID" value="CAH90959.1"/>
    <property type="molecule type" value="mRNA"/>
</dbReference>
<dbReference type="RefSeq" id="NP_001125551.1">
    <property type="nucleotide sequence ID" value="NM_001132079.1"/>
</dbReference>
<dbReference type="BMRB" id="Q5RBA1"/>
<dbReference type="SMR" id="Q5RBA1"/>
<dbReference type="STRING" id="9601.ENSPPYP00000020124"/>
<dbReference type="GeneID" id="100172464"/>
<dbReference type="KEGG" id="pon:100172464"/>
<dbReference type="CTD" id="54556"/>
<dbReference type="eggNOG" id="KOG1973">
    <property type="taxonomic scope" value="Eukaryota"/>
</dbReference>
<dbReference type="InParanoid" id="Q5RBA1"/>
<dbReference type="OrthoDB" id="5411773at2759"/>
<dbReference type="Proteomes" id="UP000001595">
    <property type="component" value="Unplaced"/>
</dbReference>
<dbReference type="GO" id="GO:0035267">
    <property type="term" value="C:NuA4 histone acetyltransferase complex"/>
    <property type="evidence" value="ECO:0000250"/>
    <property type="project" value="UniProtKB"/>
</dbReference>
<dbReference type="GO" id="GO:0032777">
    <property type="term" value="C:piccolo histone acetyltransferase complex"/>
    <property type="evidence" value="ECO:0000250"/>
    <property type="project" value="UniProtKB"/>
</dbReference>
<dbReference type="GO" id="GO:0000812">
    <property type="term" value="C:Swr1 complex"/>
    <property type="evidence" value="ECO:0000250"/>
    <property type="project" value="UniProtKB"/>
</dbReference>
<dbReference type="GO" id="GO:0035064">
    <property type="term" value="F:methylated histone binding"/>
    <property type="evidence" value="ECO:0007669"/>
    <property type="project" value="UniProtKB-ARBA"/>
</dbReference>
<dbReference type="GO" id="GO:0008270">
    <property type="term" value="F:zinc ion binding"/>
    <property type="evidence" value="ECO:0007669"/>
    <property type="project" value="UniProtKB-KW"/>
</dbReference>
<dbReference type="GO" id="GO:0006338">
    <property type="term" value="P:chromatin remodeling"/>
    <property type="evidence" value="ECO:0007669"/>
    <property type="project" value="GOC"/>
</dbReference>
<dbReference type="CDD" id="cd16858">
    <property type="entry name" value="ING_ING3_Yng2p"/>
    <property type="match status" value="1"/>
</dbReference>
<dbReference type="CDD" id="cd15585">
    <property type="entry name" value="PHD_ING3"/>
    <property type="match status" value="1"/>
</dbReference>
<dbReference type="FunFam" id="3.30.40.10:FF:000103">
    <property type="entry name" value="Inhibitor of growth protein"/>
    <property type="match status" value="1"/>
</dbReference>
<dbReference type="Gene3D" id="6.10.140.1740">
    <property type="match status" value="1"/>
</dbReference>
<dbReference type="Gene3D" id="3.30.40.10">
    <property type="entry name" value="Zinc/RING finger domain, C3HC4 (zinc finger)"/>
    <property type="match status" value="1"/>
</dbReference>
<dbReference type="InterPro" id="IPR042020">
    <property type="entry name" value="ING3_PHD"/>
</dbReference>
<dbReference type="InterPro" id="IPR028651">
    <property type="entry name" value="ING_fam"/>
</dbReference>
<dbReference type="InterPro" id="IPR024610">
    <property type="entry name" value="ING_N_histone-binding"/>
</dbReference>
<dbReference type="InterPro" id="IPR019786">
    <property type="entry name" value="Zinc_finger_PHD-type_CS"/>
</dbReference>
<dbReference type="InterPro" id="IPR011011">
    <property type="entry name" value="Znf_FYVE_PHD"/>
</dbReference>
<dbReference type="InterPro" id="IPR001965">
    <property type="entry name" value="Znf_PHD"/>
</dbReference>
<dbReference type="InterPro" id="IPR019787">
    <property type="entry name" value="Znf_PHD-finger"/>
</dbReference>
<dbReference type="InterPro" id="IPR013083">
    <property type="entry name" value="Znf_RING/FYVE/PHD"/>
</dbReference>
<dbReference type="PANTHER" id="PTHR10333">
    <property type="entry name" value="INHIBITOR OF GROWTH PROTEIN"/>
    <property type="match status" value="1"/>
</dbReference>
<dbReference type="PANTHER" id="PTHR10333:SF103">
    <property type="entry name" value="INHIBITOR OF GROWTH PROTEIN 3"/>
    <property type="match status" value="1"/>
</dbReference>
<dbReference type="Pfam" id="PF12998">
    <property type="entry name" value="ING"/>
    <property type="match status" value="1"/>
</dbReference>
<dbReference type="SMART" id="SM01408">
    <property type="entry name" value="ING"/>
    <property type="match status" value="1"/>
</dbReference>
<dbReference type="SMART" id="SM00249">
    <property type="entry name" value="PHD"/>
    <property type="match status" value="1"/>
</dbReference>
<dbReference type="SUPFAM" id="SSF57903">
    <property type="entry name" value="FYVE/PHD zinc finger"/>
    <property type="match status" value="1"/>
</dbReference>
<dbReference type="PROSITE" id="PS01359">
    <property type="entry name" value="ZF_PHD_1"/>
    <property type="match status" value="1"/>
</dbReference>
<dbReference type="PROSITE" id="PS50016">
    <property type="entry name" value="ZF_PHD_2"/>
    <property type="match status" value="1"/>
</dbReference>
<comment type="function">
    <text evidence="1">Component of the NuA4 histone acetyltransferase (HAT) complex which is involved in transcriptional activation of select genes principally by acetylation of nucleosomal histones H4 and H2A. This modification may both alter nucleosome - DNA interactions and promote interaction of the modified histones with other proteins which positively regulate transcription. This complex may be required for the activation of transcriptional programs associated with oncogene and proto-oncogene mediated growth induction, tumor suppressor mediated growth arrest and replicative senescence, apoptosis, and DNA repair. NuA4 may also play a direct role in DNA repair when directly recruited to sites of DNA damage. Component of a SWR1-like complex that specifically mediates the removal of histone H2A.Z/H2AZ1 from the nucleosome (By similarity).</text>
</comment>
<comment type="subunit">
    <text evidence="1">Interacts with H3K4me3 and to a lesser extent with H3K4me2 (By similarity). Component of the NuA4 histone acetyltransferase complex which contains the catalytic subunit KAT5/TIP60 and the subunits EP400, TRRAP/PAF400, BRD8/SMAP, EPC1, DMAP1/DNMAP1, RUVBL1/TIP49, RUVBL2, ING3, actin, ACTL6A/BAF53A, MORF4L1/MRG15, MORF4L2/MRGX, MRGBP, YEATS4/GAS41, VPS72/YL1 and MEAF6. The NuA4 complex interacts with MYC. HTATTIP/TIP60, EPC1, and ING3 together constitute a minimal HAT complex termed Piccolo NuA4. Component of a SWR1-like complex (By similarity).</text>
</comment>
<comment type="subcellular location">
    <subcellularLocation>
        <location evidence="1">Nucleus</location>
    </subcellularLocation>
</comment>
<comment type="domain">
    <text evidence="1">The PHD-type zinc finger mediates the binding to H3K4me3.</text>
</comment>
<comment type="similarity">
    <text evidence="7">Belongs to the ING family.</text>
</comment>
<feature type="chain" id="PRO_0000354691" description="Inhibitor of growth protein 3">
    <location>
        <begin position="1"/>
        <end position="403"/>
    </location>
</feature>
<feature type="zinc finger region" description="PHD-type" evidence="5">
    <location>
        <begin position="345"/>
        <end position="394"/>
    </location>
</feature>
<feature type="region of interest" description="Disordered" evidence="6">
    <location>
        <begin position="112"/>
        <end position="149"/>
    </location>
</feature>
<feature type="region of interest" description="Disordered" evidence="6">
    <location>
        <begin position="271"/>
        <end position="310"/>
    </location>
</feature>
<feature type="compositionally biased region" description="Low complexity" evidence="6">
    <location>
        <begin position="290"/>
        <end position="310"/>
    </location>
</feature>
<feature type="binding site" evidence="4">
    <location>
        <position position="348"/>
    </location>
    <ligand>
        <name>Zn(2+)</name>
        <dbReference type="ChEBI" id="CHEBI:29105"/>
        <label>1</label>
    </ligand>
</feature>
<feature type="binding site" evidence="4">
    <location>
        <position position="350"/>
    </location>
    <ligand>
        <name>Zn(2+)</name>
        <dbReference type="ChEBI" id="CHEBI:29105"/>
        <label>1</label>
    </ligand>
</feature>
<feature type="binding site" evidence="4">
    <location>
        <position position="361"/>
    </location>
    <ligand>
        <name>Zn(2+)</name>
        <dbReference type="ChEBI" id="CHEBI:29105"/>
        <label>2</label>
    </ligand>
</feature>
<feature type="binding site" evidence="4">
    <location>
        <position position="366"/>
    </location>
    <ligand>
        <name>Zn(2+)</name>
        <dbReference type="ChEBI" id="CHEBI:29105"/>
        <label>2</label>
    </ligand>
</feature>
<feature type="binding site" evidence="4">
    <location>
        <position position="372"/>
    </location>
    <ligand>
        <name>Zn(2+)</name>
        <dbReference type="ChEBI" id="CHEBI:29105"/>
        <label>1</label>
    </ligand>
</feature>
<feature type="binding site" evidence="4">
    <location>
        <position position="375"/>
    </location>
    <ligand>
        <name>Zn(2+)</name>
        <dbReference type="ChEBI" id="CHEBI:29105"/>
        <label>1</label>
    </ligand>
</feature>
<feature type="binding site" evidence="4">
    <location>
        <position position="388"/>
    </location>
    <ligand>
        <name>Zn(2+)</name>
        <dbReference type="ChEBI" id="CHEBI:29105"/>
        <label>2</label>
    </ligand>
</feature>
<feature type="binding site" evidence="4">
    <location>
        <position position="391"/>
    </location>
    <ligand>
        <name>Zn(2+)</name>
        <dbReference type="ChEBI" id="CHEBI:29105"/>
        <label>2</label>
    </ligand>
</feature>
<feature type="site" description="Histone H3K4me3 binding" evidence="4">
    <location>
        <position position="347"/>
    </location>
</feature>
<feature type="site" description="Histone H3K4me3 binding" evidence="4">
    <location>
        <position position="358"/>
    </location>
</feature>
<feature type="site" description="Histone H3K4me3 binding" evidence="4">
    <location>
        <position position="362"/>
    </location>
</feature>
<feature type="site" description="Histone H3K4me3 binding" evidence="4">
    <location>
        <position position="370"/>
    </location>
</feature>
<feature type="modified residue" description="N6-acetyllysine" evidence="2">
    <location>
        <position position="166"/>
    </location>
</feature>
<feature type="modified residue" description="N6-acetyllysine" evidence="3">
    <location>
        <position position="249"/>
    </location>
</feature>
<feature type="cross-link" description="Glycyl lysine isopeptide (Lys-Gly) (interchain with G-Cter in SUMO2)" evidence="3">
    <location>
        <position position="133"/>
    </location>
</feature>
<feature type="cross-link" description="Glycyl lysine isopeptide (Lys-Gly) (interchain with G-Cter in SUMO2)" evidence="3">
    <location>
        <position position="150"/>
    </location>
</feature>
<feature type="cross-link" description="Glycyl lysine isopeptide (Lys-Gly) (interchain with G-Cter in SUMO2)" evidence="3">
    <location>
        <position position="152"/>
    </location>
</feature>
<feature type="cross-link" description="Glycyl lysine isopeptide (Lys-Gly) (interchain with G-Cter in SUMO2)" evidence="3">
    <location>
        <position position="241"/>
    </location>
</feature>